<sequence length="305" mass="34627">MLGLPERRLPSAEFLLLLPFLLLLLLLLPAAPAPHRAAYKPVIVVHGLFDSSYSFRHLLEYINETHPGTAVTVLDLFDGRESLRPLWEQVQGFREAVAPIMAKALQGVHLICYSQGGLVCRALLSVMDEHNVDSFISLSSPQMGQYGDTNYLKWLFPTSMRSNLYRICYSPWGQEFSICNYWHDPHHDDLYLNASSFLALINGERDHPNATAWRKNFLRLGRLVLIGGPDDGVITPWQSSFFGFYDANETVLEMEKQLVYLRDSFGLKTLLARGAIVRCPMAGISHTAWHSNRTLYETCIEPWLS</sequence>
<name>PPT2_BOVIN</name>
<protein>
    <recommendedName>
        <fullName>Lysosomal thioesterase PPT2</fullName>
        <shortName>PPT-2</shortName>
        <ecNumber evidence="1">3.1.2.2</ecNumber>
    </recommendedName>
</protein>
<organism>
    <name type="scientific">Bos taurus</name>
    <name type="common">Bovine</name>
    <dbReference type="NCBI Taxonomy" id="9913"/>
    <lineage>
        <taxon>Eukaryota</taxon>
        <taxon>Metazoa</taxon>
        <taxon>Chordata</taxon>
        <taxon>Craniata</taxon>
        <taxon>Vertebrata</taxon>
        <taxon>Euteleostomi</taxon>
        <taxon>Mammalia</taxon>
        <taxon>Eutheria</taxon>
        <taxon>Laurasiatheria</taxon>
        <taxon>Artiodactyla</taxon>
        <taxon>Ruminantia</taxon>
        <taxon>Pecora</taxon>
        <taxon>Bovidae</taxon>
        <taxon>Bovinae</taxon>
        <taxon>Bos</taxon>
    </lineage>
</organism>
<gene>
    <name type="primary">PPT2</name>
</gene>
<proteinExistence type="evidence at transcript level"/>
<comment type="function">
    <text evidence="1">Catalyzes the cleavage of thioester bonds from S-palmitoyl-CoA or S-palmitoyl-N-acetylcysteamine (unbranched structures) but does not have activity against palmitoylcysteine or palmitoylated proteins, branched structures or bulky head groups. Conversely, hydrolyzes both long and short chain fatty acyl-CoA substrate.</text>
</comment>
<comment type="catalytic activity">
    <reaction evidence="1">
        <text>hexadecanoyl-CoA + H2O = hexadecanoate + CoA + H(+)</text>
        <dbReference type="Rhea" id="RHEA:16645"/>
        <dbReference type="ChEBI" id="CHEBI:7896"/>
        <dbReference type="ChEBI" id="CHEBI:15377"/>
        <dbReference type="ChEBI" id="CHEBI:15378"/>
        <dbReference type="ChEBI" id="CHEBI:57287"/>
        <dbReference type="ChEBI" id="CHEBI:57379"/>
        <dbReference type="EC" id="3.1.2.2"/>
    </reaction>
</comment>
<comment type="catalytic activity">
    <reaction evidence="1">
        <text>S-hexadecanoyl-N-acetylcysteamine + H2O = N-acetylcysteamine + hexadecanoate + H(+)</text>
        <dbReference type="Rhea" id="RHEA:84099"/>
        <dbReference type="ChEBI" id="CHEBI:7896"/>
        <dbReference type="ChEBI" id="CHEBI:15377"/>
        <dbReference type="ChEBI" id="CHEBI:15378"/>
        <dbReference type="ChEBI" id="CHEBI:74410"/>
        <dbReference type="ChEBI" id="CHEBI:233601"/>
    </reaction>
</comment>
<comment type="subcellular location">
    <subcellularLocation>
        <location evidence="1">Lysosome</location>
    </subcellularLocation>
</comment>
<comment type="similarity">
    <text evidence="3">Belongs to the palmitoyl-protein thioesterase family.</text>
</comment>
<comment type="sequence caution" evidence="3">
    <conflict type="frameshift">
        <sequence resource="EMBL-CDS" id="AAX46676"/>
    </conflict>
</comment>
<evidence type="ECO:0000250" key="1">
    <source>
        <dbReference type="UniProtKB" id="Q9UMR5"/>
    </source>
</evidence>
<evidence type="ECO:0000255" key="2"/>
<evidence type="ECO:0000305" key="3"/>
<accession>Q1JQA0</accession>
<accession>Q58CW8</accession>
<reference key="1">
    <citation type="journal article" date="2005" name="BMC Genomics">
        <title>Characterization of 954 bovine full-CDS cDNA sequences.</title>
        <authorList>
            <person name="Harhay G.P."/>
            <person name="Sonstegard T.S."/>
            <person name="Keele J.W."/>
            <person name="Heaton M.P."/>
            <person name="Clawson M.L."/>
            <person name="Snelling W.M."/>
            <person name="Wiedmann R.T."/>
            <person name="Van Tassell C.P."/>
            <person name="Smith T.P.L."/>
        </authorList>
    </citation>
    <scope>NUCLEOTIDE SEQUENCE [LARGE SCALE MRNA]</scope>
</reference>
<reference key="2">
    <citation type="submission" date="2006-05" db="EMBL/GenBank/DDBJ databases">
        <authorList>
            <consortium name="NIH - Mammalian Gene Collection (MGC) project"/>
        </authorList>
    </citation>
    <scope>NUCLEOTIDE SEQUENCE [LARGE SCALE MRNA]</scope>
    <source>
        <strain>Hereford</strain>
        <tissue>Ascending colon</tissue>
    </source>
</reference>
<dbReference type="EC" id="3.1.2.2" evidence="1"/>
<dbReference type="EMBL" id="BT021829">
    <property type="protein sequence ID" value="AAX46676.1"/>
    <property type="status" value="ALT_FRAME"/>
    <property type="molecule type" value="mRNA"/>
</dbReference>
<dbReference type="EMBL" id="BC116122">
    <property type="protein sequence ID" value="AAI16123.1"/>
    <property type="molecule type" value="mRNA"/>
</dbReference>
<dbReference type="RefSeq" id="NP_001030395.2">
    <property type="nucleotide sequence ID" value="NM_001035318.2"/>
</dbReference>
<dbReference type="RefSeq" id="XP_005223714.1">
    <property type="nucleotide sequence ID" value="XM_005223657.2"/>
</dbReference>
<dbReference type="RefSeq" id="XP_059736321.1">
    <property type="nucleotide sequence ID" value="XM_059880338.1"/>
</dbReference>
<dbReference type="RefSeq" id="XP_059736322.1">
    <property type="nucleotide sequence ID" value="XM_059880339.1"/>
</dbReference>
<dbReference type="SMR" id="Q1JQA0"/>
<dbReference type="FunCoup" id="Q1JQA0">
    <property type="interactions" value="1237"/>
</dbReference>
<dbReference type="STRING" id="9913.ENSBTAP00000062999"/>
<dbReference type="ESTHER" id="bovin-ppt2">
    <property type="family name" value="Palmitoyl-protein_thioesterase"/>
</dbReference>
<dbReference type="GlyCosmos" id="Q1JQA0">
    <property type="glycosylation" value="1 site, No reported glycans"/>
</dbReference>
<dbReference type="GlyGen" id="Q1JQA0">
    <property type="glycosylation" value="1 site"/>
</dbReference>
<dbReference type="PaxDb" id="9913-ENSBTAP00000005815"/>
<dbReference type="Ensembl" id="ENSBTAT00000005815.6">
    <property type="protein sequence ID" value="ENSBTAP00000005815.5"/>
    <property type="gene ID" value="ENSBTAG00000004436.7"/>
</dbReference>
<dbReference type="GeneID" id="516797"/>
<dbReference type="KEGG" id="bta:516797"/>
<dbReference type="CTD" id="9374"/>
<dbReference type="VEuPathDB" id="HostDB:ENSBTAG00000004436"/>
<dbReference type="VGNC" id="VGNC:57311">
    <property type="gene designation" value="PPT2"/>
</dbReference>
<dbReference type="eggNOG" id="KOG2541">
    <property type="taxonomic scope" value="Eukaryota"/>
</dbReference>
<dbReference type="GeneTree" id="ENSGT00940000155779"/>
<dbReference type="HOGENOM" id="CLU_050129_1_0_1"/>
<dbReference type="InParanoid" id="Q1JQA0"/>
<dbReference type="OMA" id="HHSDLYL"/>
<dbReference type="OrthoDB" id="155976at2759"/>
<dbReference type="TreeFam" id="TF323926"/>
<dbReference type="Reactome" id="R-BTA-75105">
    <property type="pathway name" value="Fatty acyl-CoA biosynthesis"/>
</dbReference>
<dbReference type="Proteomes" id="UP000009136">
    <property type="component" value="Chromosome 23"/>
</dbReference>
<dbReference type="Bgee" id="ENSBTAG00000004436">
    <property type="expression patterns" value="Expressed in granulosa cell and 104 other cell types or tissues"/>
</dbReference>
<dbReference type="GO" id="GO:0005576">
    <property type="term" value="C:extracellular region"/>
    <property type="evidence" value="ECO:0000318"/>
    <property type="project" value="GO_Central"/>
</dbReference>
<dbReference type="GO" id="GO:0005764">
    <property type="term" value="C:lysosome"/>
    <property type="evidence" value="ECO:0000318"/>
    <property type="project" value="GO_Central"/>
</dbReference>
<dbReference type="GO" id="GO:0047617">
    <property type="term" value="F:fatty acyl-CoA hydrolase activity"/>
    <property type="evidence" value="ECO:0000250"/>
    <property type="project" value="UniProtKB"/>
</dbReference>
<dbReference type="GO" id="GO:0098599">
    <property type="term" value="F:palmitoyl hydrolase activity"/>
    <property type="evidence" value="ECO:0000250"/>
    <property type="project" value="UniProtKB"/>
</dbReference>
<dbReference type="GO" id="GO:0008474">
    <property type="term" value="F:palmitoyl-(protein) hydrolase activity"/>
    <property type="evidence" value="ECO:0000318"/>
    <property type="project" value="GO_Central"/>
</dbReference>
<dbReference type="GO" id="GO:0016790">
    <property type="term" value="F:thiolester hydrolase activity"/>
    <property type="evidence" value="ECO:0000250"/>
    <property type="project" value="UniProtKB"/>
</dbReference>
<dbReference type="FunFam" id="3.40.50.1820:FF:000037">
    <property type="entry name" value="Lysosomal thioesterase PPT2 homolog"/>
    <property type="match status" value="1"/>
</dbReference>
<dbReference type="Gene3D" id="3.40.50.1820">
    <property type="entry name" value="alpha/beta hydrolase"/>
    <property type="match status" value="1"/>
</dbReference>
<dbReference type="InterPro" id="IPR029058">
    <property type="entry name" value="AB_hydrolase_fold"/>
</dbReference>
<dbReference type="InterPro" id="IPR002472">
    <property type="entry name" value="Palm_thioest"/>
</dbReference>
<dbReference type="PANTHER" id="PTHR11247:SF27">
    <property type="entry name" value="LYSOSOMAL THIOESTERASE PPT2"/>
    <property type="match status" value="1"/>
</dbReference>
<dbReference type="PANTHER" id="PTHR11247">
    <property type="entry name" value="PALMITOYL-PROTEIN THIOESTERASE/DOLICHYLDIPHOSPHATASE 1"/>
    <property type="match status" value="1"/>
</dbReference>
<dbReference type="Pfam" id="PF02089">
    <property type="entry name" value="Palm_thioest"/>
    <property type="match status" value="1"/>
</dbReference>
<dbReference type="PRINTS" id="PR00414">
    <property type="entry name" value="PPTHIESTRASE"/>
</dbReference>
<dbReference type="SUPFAM" id="SSF53474">
    <property type="entry name" value="alpha/beta-Hydrolases"/>
    <property type="match status" value="1"/>
</dbReference>
<keyword id="KW-1015">Disulfide bond</keyword>
<keyword id="KW-0325">Glycoprotein</keyword>
<keyword id="KW-0378">Hydrolase</keyword>
<keyword id="KW-0458">Lysosome</keyword>
<keyword id="KW-1185">Reference proteome</keyword>
<keyword id="KW-0732">Signal</keyword>
<feature type="signal peptide" evidence="2">
    <location>
        <begin position="1"/>
        <end position="32"/>
    </location>
</feature>
<feature type="chain" id="PRO_0000247506" description="Lysosomal thioesterase PPT2">
    <location>
        <begin position="33"/>
        <end position="305"/>
    </location>
</feature>
<feature type="active site" description="Nucleophile" evidence="1">
    <location>
        <position position="114"/>
    </location>
</feature>
<feature type="active site" evidence="1">
    <location>
        <position position="231"/>
    </location>
</feature>
<feature type="active site" evidence="1">
    <location>
        <position position="286"/>
    </location>
</feature>
<feature type="glycosylation site" description="N-linked (GlcNAc...) asparagine" evidence="2">
    <location>
        <position position="193"/>
    </location>
</feature>
<feature type="disulfide bond" evidence="1">
    <location>
        <begin position="112"/>
        <end position="120"/>
    </location>
</feature>
<feature type="disulfide bond" evidence="1">
    <location>
        <begin position="168"/>
        <end position="179"/>
    </location>
</feature>
<feature type="disulfide bond" evidence="1">
    <location>
        <begin position="279"/>
        <end position="299"/>
    </location>
</feature>